<keyword id="KW-0007">Acetylation</keyword>
<keyword id="KW-1003">Cell membrane</keyword>
<keyword id="KW-0967">Endosome</keyword>
<keyword id="KW-0472">Membrane</keyword>
<keyword id="KW-0653">Protein transport</keyword>
<keyword id="KW-1185">Reference proteome</keyword>
<keyword id="KW-0813">Transport</keyword>
<organism>
    <name type="scientific">Bos taurus</name>
    <name type="common">Bovine</name>
    <dbReference type="NCBI Taxonomy" id="9913"/>
    <lineage>
        <taxon>Eukaryota</taxon>
        <taxon>Metazoa</taxon>
        <taxon>Chordata</taxon>
        <taxon>Craniata</taxon>
        <taxon>Vertebrata</taxon>
        <taxon>Euteleostomi</taxon>
        <taxon>Mammalia</taxon>
        <taxon>Eutheria</taxon>
        <taxon>Laurasiatheria</taxon>
        <taxon>Artiodactyla</taxon>
        <taxon>Ruminantia</taxon>
        <taxon>Pecora</taxon>
        <taxon>Bovidae</taxon>
        <taxon>Bovinae</taxon>
        <taxon>Bos</taxon>
    </lineage>
</organism>
<dbReference type="EMBL" id="BC102078">
    <property type="protein sequence ID" value="AAI02079.1"/>
    <property type="molecule type" value="mRNA"/>
</dbReference>
<dbReference type="RefSeq" id="NP_001030581.1">
    <property type="nucleotide sequence ID" value="NM_001035504.2"/>
</dbReference>
<dbReference type="RefSeq" id="XP_024857537.1">
    <property type="nucleotide sequence ID" value="XM_025001769.2"/>
</dbReference>
<dbReference type="RefSeq" id="XP_059730273.1">
    <property type="nucleotide sequence ID" value="XM_059874290.1"/>
</dbReference>
<dbReference type="BMRB" id="Q3T178"/>
<dbReference type="SMR" id="Q3T178"/>
<dbReference type="FunCoup" id="Q3T178">
    <property type="interactions" value="3440"/>
</dbReference>
<dbReference type="STRING" id="9913.ENSBTAP00000056763"/>
<dbReference type="GeneID" id="618785"/>
<dbReference type="KEGG" id="bta:618785"/>
<dbReference type="CTD" id="51160"/>
<dbReference type="VEuPathDB" id="HostDB:ENSBTAG00000026320"/>
<dbReference type="InParanoid" id="Q3T178"/>
<dbReference type="OMA" id="CDEFPTV"/>
<dbReference type="OrthoDB" id="2671at2759"/>
<dbReference type="Reactome" id="R-BTA-917729">
    <property type="pathway name" value="Endosomal Sorting Complex Required For Transport (ESCRT)"/>
</dbReference>
<dbReference type="Proteomes" id="UP000009136">
    <property type="component" value="Chromosome 14"/>
</dbReference>
<dbReference type="Bgee" id="ENSBTAG00000026320">
    <property type="expression patterns" value="Expressed in vas deferens and 106 other cell types or tissues"/>
</dbReference>
<dbReference type="GO" id="GO:0005737">
    <property type="term" value="C:cytoplasm"/>
    <property type="evidence" value="ECO:0000250"/>
    <property type="project" value="UniProtKB"/>
</dbReference>
<dbReference type="GO" id="GO:0000813">
    <property type="term" value="C:ESCRT I complex"/>
    <property type="evidence" value="ECO:0000250"/>
    <property type="project" value="UniProtKB"/>
</dbReference>
<dbReference type="GO" id="GO:0031902">
    <property type="term" value="C:late endosome membrane"/>
    <property type="evidence" value="ECO:0007669"/>
    <property type="project" value="UniProtKB-SubCell"/>
</dbReference>
<dbReference type="GO" id="GO:0005886">
    <property type="term" value="C:plasma membrane"/>
    <property type="evidence" value="ECO:0007669"/>
    <property type="project" value="UniProtKB-SubCell"/>
</dbReference>
<dbReference type="GO" id="GO:0044877">
    <property type="term" value="F:protein-containing complex binding"/>
    <property type="evidence" value="ECO:0000318"/>
    <property type="project" value="GO_Central"/>
</dbReference>
<dbReference type="GO" id="GO:0031397">
    <property type="term" value="P:negative regulation of protein ubiquitination"/>
    <property type="evidence" value="ECO:0000250"/>
    <property type="project" value="UniProtKB"/>
</dbReference>
<dbReference type="GO" id="GO:0043328">
    <property type="term" value="P:protein transport to vacuole involved in ubiquitin-dependent protein catabolic process via the multivesicular body sorting pathway"/>
    <property type="evidence" value="ECO:0000318"/>
    <property type="project" value="GO_Central"/>
</dbReference>
<dbReference type="GO" id="GO:0043162">
    <property type="term" value="P:ubiquitin-dependent protein catabolic process via the multivesicular body sorting pathway"/>
    <property type="evidence" value="ECO:0000250"/>
    <property type="project" value="UniProtKB"/>
</dbReference>
<dbReference type="FunFam" id="1.20.120.1130:FF:000001">
    <property type="entry name" value="Vacuolar protein sorting-associated protein 28 homolog"/>
    <property type="match status" value="1"/>
</dbReference>
<dbReference type="FunFam" id="1.20.1440.200:FF:000001">
    <property type="entry name" value="Vacuolar protein sorting-associated protein 28 homolog"/>
    <property type="match status" value="1"/>
</dbReference>
<dbReference type="Gene3D" id="1.20.120.1130">
    <property type="match status" value="1"/>
</dbReference>
<dbReference type="Gene3D" id="1.20.1440.200">
    <property type="match status" value="1"/>
</dbReference>
<dbReference type="InterPro" id="IPR037202">
    <property type="entry name" value="ESCRT_assembly_dom"/>
</dbReference>
<dbReference type="InterPro" id="IPR007143">
    <property type="entry name" value="Vps28"/>
</dbReference>
<dbReference type="InterPro" id="IPR017899">
    <property type="entry name" value="VPS28_C"/>
</dbReference>
<dbReference type="InterPro" id="IPR037206">
    <property type="entry name" value="VPS28_C_sf"/>
</dbReference>
<dbReference type="InterPro" id="IPR017898">
    <property type="entry name" value="VPS28_N"/>
</dbReference>
<dbReference type="InterPro" id="IPR038358">
    <property type="entry name" value="VPS28_N_sf"/>
</dbReference>
<dbReference type="PANTHER" id="PTHR12937">
    <property type="entry name" value="VACUOLAR PROTEIN SORTING 28, ISOFORM 2 VPS28"/>
    <property type="match status" value="1"/>
</dbReference>
<dbReference type="PANTHER" id="PTHR12937:SF0">
    <property type="entry name" value="VACUOLAR PROTEIN SORTING-ASSOCIATED PROTEIN 28 HOMOLOG"/>
    <property type="match status" value="1"/>
</dbReference>
<dbReference type="Pfam" id="PF03997">
    <property type="entry name" value="VPS28"/>
    <property type="match status" value="1"/>
</dbReference>
<dbReference type="PIRSF" id="PIRSF017535">
    <property type="entry name" value="VPS28"/>
    <property type="match status" value="1"/>
</dbReference>
<dbReference type="SUPFAM" id="SSF140111">
    <property type="entry name" value="Endosomal sorting complex assembly domain"/>
    <property type="match status" value="1"/>
</dbReference>
<dbReference type="SUPFAM" id="SSF140427">
    <property type="entry name" value="VPS28 C-terminal domain-like"/>
    <property type="match status" value="1"/>
</dbReference>
<dbReference type="PROSITE" id="PS51310">
    <property type="entry name" value="VPS28_C"/>
    <property type="match status" value="1"/>
</dbReference>
<dbReference type="PROSITE" id="PS51313">
    <property type="entry name" value="VPS28_N"/>
    <property type="match status" value="1"/>
</dbReference>
<protein>
    <recommendedName>
        <fullName>Vacuolar protein sorting-associated protein 28 homolog</fullName>
    </recommendedName>
    <alternativeName>
        <fullName>ESCRT-I complex subunit VPS28</fullName>
    </alternativeName>
</protein>
<name>VPS28_BOVIN</name>
<proteinExistence type="evidence at transcript level"/>
<reference key="1">
    <citation type="submission" date="2005-08" db="EMBL/GenBank/DDBJ databases">
        <authorList>
            <consortium name="NIH - Mammalian Gene Collection (MGC) project"/>
        </authorList>
    </citation>
    <scope>NUCLEOTIDE SEQUENCE [LARGE SCALE MRNA]</scope>
    <source>
        <strain>Crossbred X Angus</strain>
        <tissue>Ileum</tissue>
    </source>
</reference>
<comment type="function">
    <text evidence="1">Component of the ESCRT-I complex, a regulator of vesicular trafficking process.</text>
</comment>
<comment type="subunit">
    <text evidence="1">Component of the ESCRT-I complex (endosomal sorting complex required for transport I) which consists of TSG101, VPS28, a VPS37 protein (VPS37A to -D) and MVB12A or MVB12B in a 1:1:1:1 stoichiometry. Interacts with TSG101, VPS37B, VPS37C, MVB12A and MVB12B. Component of an ESCRT-I complex (endosomal sorting complex required for transport I) which consists of TSG101, VPS28, VPS37A and UBAP1 in a 1:1:1:1 stoichiometry. Interacts with VPS36; the interaction mediates the association with the ESCRT-II complex. Interacts with SNF8 and VPS25. Interacts with CEP55 (By similarity).</text>
</comment>
<comment type="subcellular location">
    <subcellularLocation>
        <location evidence="1">Cell membrane</location>
    </subcellularLocation>
    <subcellularLocation>
        <location evidence="1">Late endosome membrane</location>
        <topology evidence="1">Peripheral membrane protein</topology>
    </subcellularLocation>
</comment>
<comment type="similarity">
    <text evidence="3 4">Belongs to the VPS28 family.</text>
</comment>
<evidence type="ECO:0000250" key="1"/>
<evidence type="ECO:0000250" key="2">
    <source>
        <dbReference type="UniProtKB" id="Q9UK41"/>
    </source>
</evidence>
<evidence type="ECO:0000255" key="3">
    <source>
        <dbReference type="PROSITE-ProRule" id="PRU00642"/>
    </source>
</evidence>
<evidence type="ECO:0000255" key="4">
    <source>
        <dbReference type="PROSITE-ProRule" id="PRU00645"/>
    </source>
</evidence>
<gene>
    <name type="primary">VPS28</name>
</gene>
<accession>Q3T178</accession>
<feature type="chain" id="PRO_0000253019" description="Vacuolar protein sorting-associated protein 28 homolog">
    <location>
        <begin position="1"/>
        <end position="221"/>
    </location>
</feature>
<feature type="domain" description="VPS28 N-terminal" evidence="4">
    <location>
        <begin position="13"/>
        <end position="120"/>
    </location>
</feature>
<feature type="domain" description="VPS28 C-terminal" evidence="3">
    <location>
        <begin position="124"/>
        <end position="220"/>
    </location>
</feature>
<feature type="modified residue" description="N-acetylmethionine" evidence="2">
    <location>
        <position position="1"/>
    </location>
</feature>
<sequence length="221" mass="25484">MFHGIPATPGMGAPGNKPELYEEVKLYKNAREREKYDNMAELFAVVKTMQALEKAYIKDCVTPNEYTAACSRLLVQYKAAFRQVQGSEISSIDEFCRKFRLDCPLAMERIKEDRPITIKDDKGNLNRCIADVVSLFITVMDKLRLEIRAMDEIQPDLRELMETMHRMSHLPPDFEGRQTVSQWLQTLSGMSASDELDDSQVRQMLFDLESAYNAFNRFLHA</sequence>